<sequence>MHSLLRPSRFSANQSVLCLLQRHRVFFSSISVKPRKRMVYCVVSYRGTGFAGLQYNANVKTIQDTLFQAFARVGAVVQVNADSPKKIRMCSAARTDKGVHAIVNVLGLKVLDNQPLPHVVNLVNDILPPCIRVWKMARTFNSFSPHTVCDSRVYEYWLPVSSLLTPRPCTLEAYVIAKASEKAFPINETLSHLANLSKQDCVANSLSEPFRLSKPKLDFLKHACTMFRGTHRFHSYTTEKGFSDASSRRFLLDVRVDNLHIDKLNRQWVKLIFHGQSFMKHQIRKMVGILIHLTRTGWNAQVLLNTFNNSYRIRIPRAPAEFLLLNQPIFQAFNKKCSRFDHEPVEWSCAQKGIDQFAHSFLRTPMFDCFISSESFQSFFILQKQFQLFQDLALLTSFDFLEPSSRRDILGEK</sequence>
<feature type="chain" id="PRO_0000316610" description="Putative tRNA pseudouridine synthase C16C4.06c">
    <location>
        <begin position="1"/>
        <end position="413"/>
    </location>
</feature>
<feature type="active site" description="Nucleophile" evidence="1">
    <location>
        <position position="96"/>
    </location>
</feature>
<feature type="binding site" evidence="1">
    <location>
        <position position="154"/>
    </location>
    <ligand>
        <name>substrate</name>
    </ligand>
</feature>
<reference key="1">
    <citation type="journal article" date="2002" name="Nature">
        <title>The genome sequence of Schizosaccharomyces pombe.</title>
        <authorList>
            <person name="Wood V."/>
            <person name="Gwilliam R."/>
            <person name="Rajandream M.A."/>
            <person name="Lyne M.H."/>
            <person name="Lyne R."/>
            <person name="Stewart A."/>
            <person name="Sgouros J.G."/>
            <person name="Peat N."/>
            <person name="Hayles J."/>
            <person name="Baker S.G."/>
            <person name="Basham D."/>
            <person name="Bowman S."/>
            <person name="Brooks K."/>
            <person name="Brown D."/>
            <person name="Brown S."/>
            <person name="Chillingworth T."/>
            <person name="Churcher C.M."/>
            <person name="Collins M."/>
            <person name="Connor R."/>
            <person name="Cronin A."/>
            <person name="Davis P."/>
            <person name="Feltwell T."/>
            <person name="Fraser A."/>
            <person name="Gentles S."/>
            <person name="Goble A."/>
            <person name="Hamlin N."/>
            <person name="Harris D.E."/>
            <person name="Hidalgo J."/>
            <person name="Hodgson G."/>
            <person name="Holroyd S."/>
            <person name="Hornsby T."/>
            <person name="Howarth S."/>
            <person name="Huckle E.J."/>
            <person name="Hunt S."/>
            <person name="Jagels K."/>
            <person name="James K.D."/>
            <person name="Jones L."/>
            <person name="Jones M."/>
            <person name="Leather S."/>
            <person name="McDonald S."/>
            <person name="McLean J."/>
            <person name="Mooney P."/>
            <person name="Moule S."/>
            <person name="Mungall K.L."/>
            <person name="Murphy L.D."/>
            <person name="Niblett D."/>
            <person name="Odell C."/>
            <person name="Oliver K."/>
            <person name="O'Neil S."/>
            <person name="Pearson D."/>
            <person name="Quail M.A."/>
            <person name="Rabbinowitsch E."/>
            <person name="Rutherford K.M."/>
            <person name="Rutter S."/>
            <person name="Saunders D."/>
            <person name="Seeger K."/>
            <person name="Sharp S."/>
            <person name="Skelton J."/>
            <person name="Simmonds M.N."/>
            <person name="Squares R."/>
            <person name="Squares S."/>
            <person name="Stevens K."/>
            <person name="Taylor K."/>
            <person name="Taylor R.G."/>
            <person name="Tivey A."/>
            <person name="Walsh S.V."/>
            <person name="Warren T."/>
            <person name="Whitehead S."/>
            <person name="Woodward J.R."/>
            <person name="Volckaert G."/>
            <person name="Aert R."/>
            <person name="Robben J."/>
            <person name="Grymonprez B."/>
            <person name="Weltjens I."/>
            <person name="Vanstreels E."/>
            <person name="Rieger M."/>
            <person name="Schaefer M."/>
            <person name="Mueller-Auer S."/>
            <person name="Gabel C."/>
            <person name="Fuchs M."/>
            <person name="Duesterhoeft A."/>
            <person name="Fritzc C."/>
            <person name="Holzer E."/>
            <person name="Moestl D."/>
            <person name="Hilbert H."/>
            <person name="Borzym K."/>
            <person name="Langer I."/>
            <person name="Beck A."/>
            <person name="Lehrach H."/>
            <person name="Reinhardt R."/>
            <person name="Pohl T.M."/>
            <person name="Eger P."/>
            <person name="Zimmermann W."/>
            <person name="Wedler H."/>
            <person name="Wambutt R."/>
            <person name="Purnelle B."/>
            <person name="Goffeau A."/>
            <person name="Cadieu E."/>
            <person name="Dreano S."/>
            <person name="Gloux S."/>
            <person name="Lelaure V."/>
            <person name="Mottier S."/>
            <person name="Galibert F."/>
            <person name="Aves S.J."/>
            <person name="Xiang Z."/>
            <person name="Hunt C."/>
            <person name="Moore K."/>
            <person name="Hurst S.M."/>
            <person name="Lucas M."/>
            <person name="Rochet M."/>
            <person name="Gaillardin C."/>
            <person name="Tallada V.A."/>
            <person name="Garzon A."/>
            <person name="Thode G."/>
            <person name="Daga R.R."/>
            <person name="Cruzado L."/>
            <person name="Jimenez J."/>
            <person name="Sanchez M."/>
            <person name="del Rey F."/>
            <person name="Benito J."/>
            <person name="Dominguez A."/>
            <person name="Revuelta J.L."/>
            <person name="Moreno S."/>
            <person name="Armstrong J."/>
            <person name="Forsburg S.L."/>
            <person name="Cerutti L."/>
            <person name="Lowe T."/>
            <person name="McCombie W.R."/>
            <person name="Paulsen I."/>
            <person name="Potashkin J."/>
            <person name="Shpakovski G.V."/>
            <person name="Ussery D."/>
            <person name="Barrell B.G."/>
            <person name="Nurse P."/>
        </authorList>
    </citation>
    <scope>NUCLEOTIDE SEQUENCE [LARGE SCALE GENOMIC DNA]</scope>
    <source>
        <strain>972 / ATCC 24843</strain>
    </source>
</reference>
<proteinExistence type="inferred from homology"/>
<dbReference type="EC" id="5.4.99.-"/>
<dbReference type="EMBL" id="CU329672">
    <property type="protein sequence ID" value="CAA20745.2"/>
    <property type="molecule type" value="Genomic_DNA"/>
</dbReference>
<dbReference type="PIR" id="T41096">
    <property type="entry name" value="T41096"/>
</dbReference>
<dbReference type="RefSeq" id="NP_587916.1">
    <property type="nucleotide sequence ID" value="NM_001022907.2"/>
</dbReference>
<dbReference type="SMR" id="O74451"/>
<dbReference type="BioGRID" id="275925">
    <property type="interactions" value="13"/>
</dbReference>
<dbReference type="FunCoup" id="O74451">
    <property type="interactions" value="270"/>
</dbReference>
<dbReference type="STRING" id="284812.O74451"/>
<dbReference type="PaxDb" id="4896-SPCC16C4.06c.1"/>
<dbReference type="EnsemblFungi" id="SPCC16C4.06c.1">
    <property type="protein sequence ID" value="SPCC16C4.06c.1:pep"/>
    <property type="gene ID" value="SPCC16C4.06c"/>
</dbReference>
<dbReference type="PomBase" id="SPCC16C4.06c"/>
<dbReference type="VEuPathDB" id="FungiDB:SPCC16C4.06c"/>
<dbReference type="eggNOG" id="KOG2553">
    <property type="taxonomic scope" value="Eukaryota"/>
</dbReference>
<dbReference type="HOGENOM" id="CLU_021971_4_0_1"/>
<dbReference type="InParanoid" id="O74451"/>
<dbReference type="OMA" id="CDARTYT"/>
<dbReference type="PhylomeDB" id="O74451"/>
<dbReference type="PRO" id="PR:O74451"/>
<dbReference type="Proteomes" id="UP000002485">
    <property type="component" value="Chromosome III"/>
</dbReference>
<dbReference type="GO" id="GO:0005737">
    <property type="term" value="C:cytoplasm"/>
    <property type="evidence" value="ECO:0007005"/>
    <property type="project" value="PomBase"/>
</dbReference>
<dbReference type="GO" id="GO:0005634">
    <property type="term" value="C:nucleus"/>
    <property type="evidence" value="ECO:0000318"/>
    <property type="project" value="GO_Central"/>
</dbReference>
<dbReference type="GO" id="GO:0016829">
    <property type="term" value="F:lyase activity"/>
    <property type="evidence" value="ECO:0007669"/>
    <property type="project" value="UniProtKB-KW"/>
</dbReference>
<dbReference type="GO" id="GO:0009982">
    <property type="term" value="F:pseudouridine synthase activity"/>
    <property type="evidence" value="ECO:0000318"/>
    <property type="project" value="GO_Central"/>
</dbReference>
<dbReference type="GO" id="GO:0003723">
    <property type="term" value="F:RNA binding"/>
    <property type="evidence" value="ECO:0007669"/>
    <property type="project" value="InterPro"/>
</dbReference>
<dbReference type="GO" id="GO:0106029">
    <property type="term" value="F:tRNA pseudouridine synthase activity"/>
    <property type="evidence" value="ECO:0007669"/>
    <property type="project" value="RHEA"/>
</dbReference>
<dbReference type="GO" id="GO:1990481">
    <property type="term" value="P:mRNA pseudouridine synthesis"/>
    <property type="evidence" value="ECO:0000318"/>
    <property type="project" value="GO_Central"/>
</dbReference>
<dbReference type="GO" id="GO:0031119">
    <property type="term" value="P:tRNA pseudouridine synthesis"/>
    <property type="evidence" value="ECO:0000318"/>
    <property type="project" value="GO_Central"/>
</dbReference>
<dbReference type="CDD" id="cd02568">
    <property type="entry name" value="PseudoU_synth_PUS1_PUS2"/>
    <property type="match status" value="1"/>
</dbReference>
<dbReference type="FunFam" id="3.30.70.580:FF:000035">
    <property type="entry name" value="tRNA pseudouridine synthase, putative"/>
    <property type="match status" value="1"/>
</dbReference>
<dbReference type="Gene3D" id="3.30.70.660">
    <property type="entry name" value="Pseudouridine synthase I, catalytic domain, C-terminal subdomain"/>
    <property type="match status" value="1"/>
</dbReference>
<dbReference type="Gene3D" id="3.30.70.580">
    <property type="entry name" value="Pseudouridine synthase I, catalytic domain, N-terminal subdomain"/>
    <property type="match status" value="1"/>
</dbReference>
<dbReference type="InterPro" id="IPR020103">
    <property type="entry name" value="PsdUridine_synth_cat_dom_sf"/>
</dbReference>
<dbReference type="InterPro" id="IPR001406">
    <property type="entry name" value="PsdUridine_synth_TruA"/>
</dbReference>
<dbReference type="InterPro" id="IPR020097">
    <property type="entry name" value="PsdUridine_synth_TruA_a/b_dom"/>
</dbReference>
<dbReference type="InterPro" id="IPR020095">
    <property type="entry name" value="PsdUridine_synth_TruA_C"/>
</dbReference>
<dbReference type="InterPro" id="IPR041708">
    <property type="entry name" value="PUS1/PUS2-like"/>
</dbReference>
<dbReference type="InterPro" id="IPR020094">
    <property type="entry name" value="TruA/RsuA/RluB/E/F_N"/>
</dbReference>
<dbReference type="NCBIfam" id="TIGR00071">
    <property type="entry name" value="hisT_truA"/>
    <property type="match status" value="1"/>
</dbReference>
<dbReference type="PANTHER" id="PTHR11142">
    <property type="entry name" value="PSEUDOURIDYLATE SYNTHASE"/>
    <property type="match status" value="1"/>
</dbReference>
<dbReference type="PANTHER" id="PTHR11142:SF4">
    <property type="entry name" value="PSEUDOURIDYLATE SYNTHASE 1 HOMOLOG"/>
    <property type="match status" value="1"/>
</dbReference>
<dbReference type="Pfam" id="PF01416">
    <property type="entry name" value="PseudoU_synth_1"/>
    <property type="match status" value="1"/>
</dbReference>
<dbReference type="SUPFAM" id="SSF55120">
    <property type="entry name" value="Pseudouridine synthase"/>
    <property type="match status" value="1"/>
</dbReference>
<gene>
    <name type="ORF">SPCC16C4.06c</name>
</gene>
<evidence type="ECO:0000250" key="1"/>
<evidence type="ECO:0000305" key="2"/>
<protein>
    <recommendedName>
        <fullName>Putative tRNA pseudouridine synthase C16C4.06c</fullName>
        <ecNumber>5.4.99.-</ecNumber>
    </recommendedName>
</protein>
<accession>O74451</accession>
<keyword id="KW-0963">Cytoplasm</keyword>
<keyword id="KW-0413">Isomerase</keyword>
<keyword id="KW-0456">Lyase</keyword>
<keyword id="KW-0539">Nucleus</keyword>
<keyword id="KW-1185">Reference proteome</keyword>
<keyword id="KW-0819">tRNA processing</keyword>
<comment type="catalytic activity">
    <reaction>
        <text>a uridine in tRNA = a pseudouridine in tRNA</text>
        <dbReference type="Rhea" id="RHEA:54572"/>
        <dbReference type="Rhea" id="RHEA-COMP:13339"/>
        <dbReference type="Rhea" id="RHEA-COMP:13934"/>
        <dbReference type="ChEBI" id="CHEBI:65314"/>
        <dbReference type="ChEBI" id="CHEBI:65315"/>
    </reaction>
</comment>
<comment type="subcellular location">
    <subcellularLocation>
        <location>Cytoplasm</location>
    </subcellularLocation>
    <subcellularLocation>
        <location evidence="1">Nucleus</location>
    </subcellularLocation>
</comment>
<comment type="similarity">
    <text evidence="2">Belongs to the tRNA pseudouridine synthase TruA family.</text>
</comment>
<organism>
    <name type="scientific">Schizosaccharomyces pombe (strain 972 / ATCC 24843)</name>
    <name type="common">Fission yeast</name>
    <dbReference type="NCBI Taxonomy" id="284812"/>
    <lineage>
        <taxon>Eukaryota</taxon>
        <taxon>Fungi</taxon>
        <taxon>Dikarya</taxon>
        <taxon>Ascomycota</taxon>
        <taxon>Taphrinomycotina</taxon>
        <taxon>Schizosaccharomycetes</taxon>
        <taxon>Schizosaccharomycetales</taxon>
        <taxon>Schizosaccharomycetaceae</taxon>
        <taxon>Schizosaccharomyces</taxon>
    </lineage>
</organism>
<name>YCG6_SCHPO</name>